<name>VATA_STRPJ</name>
<dbReference type="EC" id="7.1.2.2" evidence="1"/>
<dbReference type="EMBL" id="FM211187">
    <property type="protein sequence ID" value="CAR69012.1"/>
    <property type="molecule type" value="Genomic_DNA"/>
</dbReference>
<dbReference type="RefSeq" id="WP_000191781.1">
    <property type="nucleotide sequence ID" value="NC_011900.1"/>
</dbReference>
<dbReference type="SMR" id="B8ZK31"/>
<dbReference type="KEGG" id="sne:SPN23F12090"/>
<dbReference type="HOGENOM" id="CLU_008162_3_1_9"/>
<dbReference type="GO" id="GO:0045259">
    <property type="term" value="C:proton-transporting ATP synthase complex"/>
    <property type="evidence" value="ECO:0007669"/>
    <property type="project" value="UniProtKB-ARBA"/>
</dbReference>
<dbReference type="GO" id="GO:0005524">
    <property type="term" value="F:ATP binding"/>
    <property type="evidence" value="ECO:0007669"/>
    <property type="project" value="UniProtKB-UniRule"/>
</dbReference>
<dbReference type="GO" id="GO:0046933">
    <property type="term" value="F:proton-transporting ATP synthase activity, rotational mechanism"/>
    <property type="evidence" value="ECO:0007669"/>
    <property type="project" value="UniProtKB-UniRule"/>
</dbReference>
<dbReference type="GO" id="GO:0046961">
    <property type="term" value="F:proton-transporting ATPase activity, rotational mechanism"/>
    <property type="evidence" value="ECO:0007669"/>
    <property type="project" value="InterPro"/>
</dbReference>
<dbReference type="GO" id="GO:0042777">
    <property type="term" value="P:proton motive force-driven plasma membrane ATP synthesis"/>
    <property type="evidence" value="ECO:0007669"/>
    <property type="project" value="UniProtKB-UniRule"/>
</dbReference>
<dbReference type="CDD" id="cd18111">
    <property type="entry name" value="ATP-synt_V_A-type_alpha_C"/>
    <property type="match status" value="1"/>
</dbReference>
<dbReference type="CDD" id="cd18119">
    <property type="entry name" value="ATP-synt_V_A-type_alpha_N"/>
    <property type="match status" value="1"/>
</dbReference>
<dbReference type="CDD" id="cd01134">
    <property type="entry name" value="V_A-ATPase_A"/>
    <property type="match status" value="1"/>
</dbReference>
<dbReference type="FunFam" id="2.40.30.20:FF:000002">
    <property type="entry name" value="V-type proton ATPase catalytic subunit A"/>
    <property type="match status" value="1"/>
</dbReference>
<dbReference type="FunFam" id="2.40.50.100:FF:000008">
    <property type="entry name" value="V-type proton ATPase catalytic subunit A"/>
    <property type="match status" value="1"/>
</dbReference>
<dbReference type="Gene3D" id="2.40.30.20">
    <property type="match status" value="1"/>
</dbReference>
<dbReference type="Gene3D" id="2.40.50.100">
    <property type="match status" value="1"/>
</dbReference>
<dbReference type="Gene3D" id="1.10.1140.10">
    <property type="entry name" value="Bovine Mitochondrial F1-atpase, Atp Synthase Beta Chain, Chain D, domain 3"/>
    <property type="match status" value="1"/>
</dbReference>
<dbReference type="Gene3D" id="3.40.50.300">
    <property type="entry name" value="P-loop containing nucleotide triphosphate hydrolases"/>
    <property type="match status" value="1"/>
</dbReference>
<dbReference type="HAMAP" id="MF_00309">
    <property type="entry name" value="ATP_synth_A_arch"/>
    <property type="match status" value="1"/>
</dbReference>
<dbReference type="InterPro" id="IPR055190">
    <property type="entry name" value="ATP-synt_VA_C"/>
</dbReference>
<dbReference type="InterPro" id="IPR031686">
    <property type="entry name" value="ATP-synth_a_Xtn"/>
</dbReference>
<dbReference type="InterPro" id="IPR023366">
    <property type="entry name" value="ATP_synth_asu-like_sf"/>
</dbReference>
<dbReference type="InterPro" id="IPR020003">
    <property type="entry name" value="ATPase_a/bsu_AS"/>
</dbReference>
<dbReference type="InterPro" id="IPR004100">
    <property type="entry name" value="ATPase_F1/V1/A1_a/bsu_N"/>
</dbReference>
<dbReference type="InterPro" id="IPR036121">
    <property type="entry name" value="ATPase_F1/V1/A1_a/bsu_N_sf"/>
</dbReference>
<dbReference type="InterPro" id="IPR000194">
    <property type="entry name" value="ATPase_F1/V1/A1_a/bsu_nucl-bd"/>
</dbReference>
<dbReference type="InterPro" id="IPR024034">
    <property type="entry name" value="ATPase_F1/V1_b/a_C"/>
</dbReference>
<dbReference type="InterPro" id="IPR027417">
    <property type="entry name" value="P-loop_NTPase"/>
</dbReference>
<dbReference type="InterPro" id="IPR022878">
    <property type="entry name" value="V-ATPase_asu"/>
</dbReference>
<dbReference type="NCBIfam" id="NF003220">
    <property type="entry name" value="PRK04192.1"/>
    <property type="match status" value="1"/>
</dbReference>
<dbReference type="PANTHER" id="PTHR43607:SF1">
    <property type="entry name" value="H(+)-TRANSPORTING TWO-SECTOR ATPASE"/>
    <property type="match status" value="1"/>
</dbReference>
<dbReference type="PANTHER" id="PTHR43607">
    <property type="entry name" value="V-TYPE PROTON ATPASE CATALYTIC SUBUNIT A"/>
    <property type="match status" value="1"/>
</dbReference>
<dbReference type="Pfam" id="PF00006">
    <property type="entry name" value="ATP-synt_ab"/>
    <property type="match status" value="1"/>
</dbReference>
<dbReference type="Pfam" id="PF02874">
    <property type="entry name" value="ATP-synt_ab_N"/>
    <property type="match status" value="1"/>
</dbReference>
<dbReference type="Pfam" id="PF16886">
    <property type="entry name" value="ATP-synt_ab_Xtn"/>
    <property type="match status" value="1"/>
</dbReference>
<dbReference type="Pfam" id="PF22919">
    <property type="entry name" value="ATP-synt_VA_C"/>
    <property type="match status" value="1"/>
</dbReference>
<dbReference type="SUPFAM" id="SSF47917">
    <property type="entry name" value="C-terminal domain of alpha and beta subunits of F1 ATP synthase"/>
    <property type="match status" value="1"/>
</dbReference>
<dbReference type="SUPFAM" id="SSF50615">
    <property type="entry name" value="N-terminal domain of alpha and beta subunits of F1 ATP synthase"/>
    <property type="match status" value="1"/>
</dbReference>
<dbReference type="SUPFAM" id="SSF52540">
    <property type="entry name" value="P-loop containing nucleoside triphosphate hydrolases"/>
    <property type="match status" value="1"/>
</dbReference>
<dbReference type="PROSITE" id="PS00152">
    <property type="entry name" value="ATPASE_ALPHA_BETA"/>
    <property type="match status" value="1"/>
</dbReference>
<accession>B8ZK31</accession>
<comment type="function">
    <text evidence="1">Produces ATP from ADP in the presence of a proton gradient across the membrane. The V-type alpha chain is a catalytic subunit.</text>
</comment>
<comment type="catalytic activity">
    <reaction evidence="1">
        <text>ATP + H2O + 4 H(+)(in) = ADP + phosphate + 5 H(+)(out)</text>
        <dbReference type="Rhea" id="RHEA:57720"/>
        <dbReference type="ChEBI" id="CHEBI:15377"/>
        <dbReference type="ChEBI" id="CHEBI:15378"/>
        <dbReference type="ChEBI" id="CHEBI:30616"/>
        <dbReference type="ChEBI" id="CHEBI:43474"/>
        <dbReference type="ChEBI" id="CHEBI:456216"/>
        <dbReference type="EC" id="7.1.2.2"/>
    </reaction>
</comment>
<comment type="similarity">
    <text evidence="1">Belongs to the ATPase alpha/beta chains family.</text>
</comment>
<proteinExistence type="inferred from homology"/>
<protein>
    <recommendedName>
        <fullName evidence="1">V-type ATP synthase alpha chain</fullName>
        <ecNumber evidence="1">7.1.2.2</ecNumber>
    </recommendedName>
    <alternativeName>
        <fullName evidence="1">V-ATPase subunit A</fullName>
    </alternativeName>
</protein>
<gene>
    <name evidence="1" type="primary">atpA</name>
    <name type="ordered locus">SPN23F12090</name>
</gene>
<feature type="chain" id="PRO_1000132883" description="V-type ATP synthase alpha chain">
    <location>
        <begin position="1"/>
        <end position="591"/>
    </location>
</feature>
<feature type="binding site" evidence="1">
    <location>
        <begin position="233"/>
        <end position="240"/>
    </location>
    <ligand>
        <name>ATP</name>
        <dbReference type="ChEBI" id="CHEBI:30616"/>
    </ligand>
</feature>
<evidence type="ECO:0000255" key="1">
    <source>
        <dbReference type="HAMAP-Rule" id="MF_00309"/>
    </source>
</evidence>
<keyword id="KW-0066">ATP synthesis</keyword>
<keyword id="KW-0067">ATP-binding</keyword>
<keyword id="KW-0375">Hydrogen ion transport</keyword>
<keyword id="KW-0406">Ion transport</keyword>
<keyword id="KW-0547">Nucleotide-binding</keyword>
<keyword id="KW-1278">Translocase</keyword>
<keyword id="KW-0813">Transport</keyword>
<reference key="1">
    <citation type="journal article" date="2009" name="J. Bacteriol.">
        <title>Role of conjugative elements in the evolution of the multidrug-resistant pandemic clone Streptococcus pneumoniae Spain23F ST81.</title>
        <authorList>
            <person name="Croucher N.J."/>
            <person name="Walker D."/>
            <person name="Romero P."/>
            <person name="Lennard N."/>
            <person name="Paterson G.K."/>
            <person name="Bason N.C."/>
            <person name="Mitchell A.M."/>
            <person name="Quail M.A."/>
            <person name="Andrew P.W."/>
            <person name="Parkhill J."/>
            <person name="Bentley S.D."/>
            <person name="Mitchell T.J."/>
        </authorList>
    </citation>
    <scope>NUCLEOTIDE SEQUENCE [LARGE SCALE GENOMIC DNA]</scope>
    <source>
        <strain>ATCC 700669 / Spain 23F-1</strain>
    </source>
</reference>
<sequence length="591" mass="65279">MTQGKIIKVSGPLVIASGMQEANIQDICRVGKLGLIGEIIEMRRDQASIQVYEETSGLGPGEPVVTTGEPLSVELGPGLISQMFDGIQRPLDRFKLATHNDFLVRGVEVPSLDRDIKWHFDSTIAIGQKVSTGDILGTVKETEVVNHKIMVPYGVSGEVVSIASGDFTIDEVVYEIKKLDGSFYKGTLMQKWPVRKARPVSKRLIPEEPLITGQRVIDAFFPVTKGGAAAVPGPFGAGKTVVQHQVAKFANVDIVIYVGCGERGNEMTDVLNEFPELIDPNTGQSIMQRTVLIANTSNMPVAAREASIYTGITMAEYFRDMGYSVAIMADSTSRWAEALREMSGRLEEMPGDEGYPAYLGSRIAEYYERAGRSQVLGLPEREGTITAIGAVSPPGGDISEPVTQNTLRIVKVFWGLDAPLAQRRHFPAINWLTSYSLYKDSVGTYIDGKEKTDWNSKITRAMNYLQRESSLEEIVRLVGIDSLSDNERLTMEIAKQIREDYLQQNAFDSVDTFTSFAKQEAMLSNILTFADQANHALELGSYFTEIMEGTVAVRDRMARSKYVSEDRLDEIKIISNEITHQIHLILETGGL</sequence>
<organism>
    <name type="scientific">Streptococcus pneumoniae (strain ATCC 700669 / Spain 23F-1)</name>
    <dbReference type="NCBI Taxonomy" id="561276"/>
    <lineage>
        <taxon>Bacteria</taxon>
        <taxon>Bacillati</taxon>
        <taxon>Bacillota</taxon>
        <taxon>Bacilli</taxon>
        <taxon>Lactobacillales</taxon>
        <taxon>Streptococcaceae</taxon>
        <taxon>Streptococcus</taxon>
    </lineage>
</organism>